<sequence>MQQIARSVALAFNNLPRPHRVMLGSLTVLTLAVAVWRPYVYHRDATPIVKTIELEQNEIRSLLPEASEPIDQAAQEDEAIPQDELDDKIAGEAGVHEYVVSTGDTLSSILNQYGIDMGDITQLAAADKELRNLKIGQQLSWTLTADGELQRLTWEVSRRETRTYDRTAANGFKMTSEMQQGEWVNNLLKGTVGGSFVASARNAGLTSAEVSAVIKAMQWQMDFRKLKKGDEFAVLMSREMLDGKREQSQLLGVRLRSEGKDYYAIRAEDGKFYDRNGTGLAKGFLRFPTAKQFRISSNFNPRRTNPVTGRVAPHRGVDFAMPQGTPVLSVGDGEVVVAKRSGAAGYYVAIRHGRSYTTRYMHLRKILVKPGQKVKRGDRIALSGNTGRSTGPHLHYEVWINQQAVNPLTAKLPRTEGLTGSDRREFLAQAKEIVPQLRFD</sequence>
<dbReference type="EC" id="3.4.24.-"/>
<dbReference type="EMBL" id="AE005674">
    <property type="protein sequence ID" value="AAN43423.1"/>
    <property type="molecule type" value="Genomic_DNA"/>
</dbReference>
<dbReference type="EMBL" id="AE014073">
    <property type="protein sequence ID" value="AAP17247.1"/>
    <property type="molecule type" value="Genomic_DNA"/>
</dbReference>
<dbReference type="RefSeq" id="NP_707716.1">
    <property type="nucleotide sequence ID" value="NC_004337.2"/>
</dbReference>
<dbReference type="RefSeq" id="WP_001184045.1">
    <property type="nucleotide sequence ID" value="NZ_WPGW01000041.1"/>
</dbReference>
<dbReference type="SMR" id="P0AFT1"/>
<dbReference type="STRING" id="198214.SF1866"/>
<dbReference type="MEROPS" id="M23.011"/>
<dbReference type="PaxDb" id="198214-SF1866"/>
<dbReference type="GeneID" id="1025021"/>
<dbReference type="GeneID" id="75202739"/>
<dbReference type="KEGG" id="sfl:SF1866"/>
<dbReference type="KEGG" id="sfx:S1932"/>
<dbReference type="PATRIC" id="fig|198214.7.peg.2224"/>
<dbReference type="HOGENOM" id="CLU_026846_0_2_6"/>
<dbReference type="UniPathway" id="UPA00963"/>
<dbReference type="Proteomes" id="UP000001006">
    <property type="component" value="Chromosome"/>
</dbReference>
<dbReference type="Proteomes" id="UP000002673">
    <property type="component" value="Chromosome"/>
</dbReference>
<dbReference type="GO" id="GO:0005886">
    <property type="term" value="C:plasma membrane"/>
    <property type="evidence" value="ECO:0007669"/>
    <property type="project" value="UniProtKB-SubCell"/>
</dbReference>
<dbReference type="GO" id="GO:0046872">
    <property type="term" value="F:metal ion binding"/>
    <property type="evidence" value="ECO:0007669"/>
    <property type="project" value="UniProtKB-KW"/>
</dbReference>
<dbReference type="GO" id="GO:0004222">
    <property type="term" value="F:metalloendopeptidase activity"/>
    <property type="evidence" value="ECO:0007669"/>
    <property type="project" value="TreeGrafter"/>
</dbReference>
<dbReference type="GO" id="GO:0045227">
    <property type="term" value="P:capsule polysaccharide biosynthetic process"/>
    <property type="evidence" value="ECO:0007669"/>
    <property type="project" value="UniProtKB-UniPathway"/>
</dbReference>
<dbReference type="GO" id="GO:0071555">
    <property type="term" value="P:cell wall organization"/>
    <property type="evidence" value="ECO:0007669"/>
    <property type="project" value="UniProtKB-KW"/>
</dbReference>
<dbReference type="GO" id="GO:0006508">
    <property type="term" value="P:proteolysis"/>
    <property type="evidence" value="ECO:0007669"/>
    <property type="project" value="UniProtKB-KW"/>
</dbReference>
<dbReference type="CDD" id="cd00118">
    <property type="entry name" value="LysM"/>
    <property type="match status" value="1"/>
</dbReference>
<dbReference type="CDD" id="cd12797">
    <property type="entry name" value="M23_peptidase"/>
    <property type="match status" value="1"/>
</dbReference>
<dbReference type="FunFam" id="2.70.70.10:FF:000002">
    <property type="entry name" value="Murein DD-endopeptidase MepM"/>
    <property type="match status" value="1"/>
</dbReference>
<dbReference type="FunFam" id="3.10.450.350:FF:000001">
    <property type="entry name" value="Murein DD-endopeptidase MepM"/>
    <property type="match status" value="1"/>
</dbReference>
<dbReference type="FunFam" id="3.10.450.350:FF:000002">
    <property type="entry name" value="Murein DD-endopeptidase MepM"/>
    <property type="match status" value="1"/>
</dbReference>
<dbReference type="Gene3D" id="3.10.450.350">
    <property type="match status" value="2"/>
</dbReference>
<dbReference type="Gene3D" id="2.70.70.10">
    <property type="entry name" value="Glucose Permease (Domain IIA)"/>
    <property type="match status" value="1"/>
</dbReference>
<dbReference type="InterPro" id="IPR050570">
    <property type="entry name" value="Cell_wall_metabolism_enzyme"/>
</dbReference>
<dbReference type="InterPro" id="IPR045834">
    <property type="entry name" value="Csd3_N2"/>
</dbReference>
<dbReference type="InterPro" id="IPR011055">
    <property type="entry name" value="Dup_hybrid_motif"/>
</dbReference>
<dbReference type="InterPro" id="IPR018392">
    <property type="entry name" value="LysM_dom"/>
</dbReference>
<dbReference type="InterPro" id="IPR036779">
    <property type="entry name" value="LysM_dom_sf"/>
</dbReference>
<dbReference type="InterPro" id="IPR013731">
    <property type="entry name" value="OapA_N"/>
</dbReference>
<dbReference type="InterPro" id="IPR016047">
    <property type="entry name" value="Peptidase_M23"/>
</dbReference>
<dbReference type="NCBIfam" id="NF008652">
    <property type="entry name" value="PRK11649.1"/>
    <property type="match status" value="1"/>
</dbReference>
<dbReference type="PANTHER" id="PTHR21666:SF292">
    <property type="entry name" value="MUREIN DD-ENDOPEPTIDASE MEPM"/>
    <property type="match status" value="1"/>
</dbReference>
<dbReference type="PANTHER" id="PTHR21666">
    <property type="entry name" value="PEPTIDASE-RELATED"/>
    <property type="match status" value="1"/>
</dbReference>
<dbReference type="Pfam" id="PF19425">
    <property type="entry name" value="Csd3_N2"/>
    <property type="match status" value="1"/>
</dbReference>
<dbReference type="Pfam" id="PF01476">
    <property type="entry name" value="LysM"/>
    <property type="match status" value="1"/>
</dbReference>
<dbReference type="Pfam" id="PF08525">
    <property type="entry name" value="OapA_N"/>
    <property type="match status" value="1"/>
</dbReference>
<dbReference type="Pfam" id="PF01551">
    <property type="entry name" value="Peptidase_M23"/>
    <property type="match status" value="1"/>
</dbReference>
<dbReference type="SMART" id="SM00257">
    <property type="entry name" value="LysM"/>
    <property type="match status" value="1"/>
</dbReference>
<dbReference type="SUPFAM" id="SSF51261">
    <property type="entry name" value="Duplicated hybrid motif"/>
    <property type="match status" value="1"/>
</dbReference>
<dbReference type="SUPFAM" id="SSF54106">
    <property type="entry name" value="LysM domain"/>
    <property type="match status" value="1"/>
</dbReference>
<dbReference type="PROSITE" id="PS51782">
    <property type="entry name" value="LYSM"/>
    <property type="match status" value="1"/>
</dbReference>
<organism>
    <name type="scientific">Shigella flexneri</name>
    <dbReference type="NCBI Taxonomy" id="623"/>
    <lineage>
        <taxon>Bacteria</taxon>
        <taxon>Pseudomonadati</taxon>
        <taxon>Pseudomonadota</taxon>
        <taxon>Gammaproteobacteria</taxon>
        <taxon>Enterobacterales</taxon>
        <taxon>Enterobacteriaceae</taxon>
        <taxon>Shigella</taxon>
    </lineage>
</organism>
<reference key="1">
    <citation type="journal article" date="2002" name="Nucleic Acids Res.">
        <title>Genome sequence of Shigella flexneri 2a: insights into pathogenicity through comparison with genomes of Escherichia coli K12 and O157.</title>
        <authorList>
            <person name="Jin Q."/>
            <person name="Yuan Z."/>
            <person name="Xu J."/>
            <person name="Wang Y."/>
            <person name="Shen Y."/>
            <person name="Lu W."/>
            <person name="Wang J."/>
            <person name="Liu H."/>
            <person name="Yang J."/>
            <person name="Yang F."/>
            <person name="Zhang X."/>
            <person name="Zhang J."/>
            <person name="Yang G."/>
            <person name="Wu H."/>
            <person name="Qu D."/>
            <person name="Dong J."/>
            <person name="Sun L."/>
            <person name="Xue Y."/>
            <person name="Zhao A."/>
            <person name="Gao Y."/>
            <person name="Zhu J."/>
            <person name="Kan B."/>
            <person name="Ding K."/>
            <person name="Chen S."/>
            <person name="Cheng H."/>
            <person name="Yao Z."/>
            <person name="He B."/>
            <person name="Chen R."/>
            <person name="Ma D."/>
            <person name="Qiang B."/>
            <person name="Wen Y."/>
            <person name="Hou Y."/>
            <person name="Yu J."/>
        </authorList>
    </citation>
    <scope>NUCLEOTIDE SEQUENCE [LARGE SCALE GENOMIC DNA]</scope>
    <source>
        <strain>301 / Serotype 2a</strain>
    </source>
</reference>
<reference key="2">
    <citation type="journal article" date="2003" name="Infect. Immun.">
        <title>Complete genome sequence and comparative genomics of Shigella flexneri serotype 2a strain 2457T.</title>
        <authorList>
            <person name="Wei J."/>
            <person name="Goldberg M.B."/>
            <person name="Burland V."/>
            <person name="Venkatesan M.M."/>
            <person name="Deng W."/>
            <person name="Fournier G."/>
            <person name="Mayhew G.F."/>
            <person name="Plunkett G. III"/>
            <person name="Rose D.J."/>
            <person name="Darling A."/>
            <person name="Mau B."/>
            <person name="Perna N.T."/>
            <person name="Payne S.M."/>
            <person name="Runyen-Janecky L.J."/>
            <person name="Zhou S."/>
            <person name="Schwartz D.C."/>
            <person name="Blattner F.R."/>
        </authorList>
    </citation>
    <scope>NUCLEOTIDE SEQUENCE [LARGE SCALE GENOMIC DNA]</scope>
    <source>
        <strain>ATCC 700930 / 2457T / Serotype 2a</strain>
    </source>
</reference>
<keyword id="KW-1003">Cell membrane</keyword>
<keyword id="KW-0961">Cell wall biogenesis/degradation</keyword>
<keyword id="KW-0378">Hydrolase</keyword>
<keyword id="KW-0472">Membrane</keyword>
<keyword id="KW-0479">Metal-binding</keyword>
<keyword id="KW-0482">Metalloprotease</keyword>
<keyword id="KW-0645">Protease</keyword>
<keyword id="KW-1185">Reference proteome</keyword>
<keyword id="KW-0812">Transmembrane</keyword>
<keyword id="KW-1133">Transmembrane helix</keyword>
<keyword id="KW-0862">Zinc</keyword>
<comment type="function">
    <text evidence="1">A murein DD-endopeptidase with specificity for D-Ala-meso-diaminopimelic acid (mDAP) cross-links. Its role is probably to cleave D-Ala-mDAP cross-links to allow insertion of new glycans and thus cell wall expansion. Functionally redundant with MepM and MepH (By similarity).</text>
</comment>
<comment type="cofactor">
    <cofactor evidence="1">
        <name>Zn(2+)</name>
        <dbReference type="ChEBI" id="CHEBI:29105"/>
    </cofactor>
</comment>
<comment type="pathway">
    <text>Cell wall biogenesis; cell wall polysaccharide biosynthesis.</text>
</comment>
<comment type="subcellular location">
    <subcellularLocation>
        <location evidence="4">Cell membrane</location>
        <topology evidence="4">Single-pass membrane protein</topology>
    </subcellularLocation>
</comment>
<comment type="similarity">
    <text evidence="4">Belongs to the peptidase M23B family.</text>
</comment>
<proteinExistence type="inferred from homology"/>
<accession>P0AFT1</accession>
<accession>O07981</accession>
<accession>P24204</accession>
<accession>P76283</accession>
<evidence type="ECO:0000250" key="1"/>
<evidence type="ECO:0000255" key="2"/>
<evidence type="ECO:0000255" key="3">
    <source>
        <dbReference type="PROSITE-ProRule" id="PRU01118"/>
    </source>
</evidence>
<evidence type="ECO:0000305" key="4"/>
<feature type="chain" id="PRO_0000045125" description="Murein DD-endopeptidase MepM">
    <location>
        <begin position="1"/>
        <end position="440"/>
    </location>
</feature>
<feature type="transmembrane region" description="Helical" evidence="2">
    <location>
        <begin position="21"/>
        <end position="40"/>
    </location>
</feature>
<feature type="domain" description="LysM" evidence="3">
    <location>
        <begin position="96"/>
        <end position="141"/>
    </location>
</feature>
<feature type="binding site" evidence="2">
    <location>
        <position position="314"/>
    </location>
    <ligand>
        <name>Zn(2+)</name>
        <dbReference type="ChEBI" id="CHEBI:29105"/>
    </ligand>
</feature>
<gene>
    <name type="primary">mepM</name>
    <name type="synonym">yebA</name>
    <name type="ordered locus">SF1866</name>
    <name type="ordered locus">S1932</name>
</gene>
<name>MEPM_SHIFL</name>
<protein>
    <recommendedName>
        <fullName>Murein DD-endopeptidase MepM</fullName>
        <ecNumber>3.4.24.-</ecNumber>
    </recommendedName>
    <alternativeName>
        <fullName>Murein hydrolase MepM</fullName>
    </alternativeName>
</protein>